<gene>
    <name evidence="1" type="primary">rplY</name>
    <name evidence="1" type="synonym">ctc</name>
    <name type="ordered locus">DvMF_0488</name>
</gene>
<accession>B8DKL6</accession>
<sequence length="191" mass="20998">MSELKTLSVRKRDGLGKGANRKLRAKTLVPGVFYNAEGLNVPIEMDTLPVEKLFEAVGRTTVFNIEVDDNGTKSTHPALFWQIQYHPVKNRFSHIDFRGVDLEKPVKIRVPLEFTGTAKGVKVGGKLEVYREALDISAKPLQMPSKITIDLTDLEIGKTISVNDLPLGEGVCAVADRNFAIVAVVSPKGEE</sequence>
<reference key="1">
    <citation type="submission" date="2008-10" db="EMBL/GenBank/DDBJ databases">
        <title>Complete sequence of Desulfovibrio vulgaris str. 'Miyazaki F'.</title>
        <authorList>
            <person name="Lucas S."/>
            <person name="Copeland A."/>
            <person name="Lapidus A."/>
            <person name="Glavina del Rio T."/>
            <person name="Dalin E."/>
            <person name="Tice H."/>
            <person name="Bruce D."/>
            <person name="Goodwin L."/>
            <person name="Pitluck S."/>
            <person name="Sims D."/>
            <person name="Brettin T."/>
            <person name="Detter J.C."/>
            <person name="Han C."/>
            <person name="Larimer F."/>
            <person name="Land M."/>
            <person name="Hauser L."/>
            <person name="Kyrpides N."/>
            <person name="Mikhailova N."/>
            <person name="Hazen T.C."/>
            <person name="Richardson P."/>
        </authorList>
    </citation>
    <scope>NUCLEOTIDE SEQUENCE [LARGE SCALE GENOMIC DNA]</scope>
    <source>
        <strain>DSM 19637 / Miyazaki F</strain>
    </source>
</reference>
<dbReference type="EMBL" id="CP001197">
    <property type="protein sequence ID" value="ACL07445.1"/>
    <property type="molecule type" value="Genomic_DNA"/>
</dbReference>
<dbReference type="SMR" id="B8DKL6"/>
<dbReference type="STRING" id="883.DvMF_0488"/>
<dbReference type="KEGG" id="dvm:DvMF_0488"/>
<dbReference type="eggNOG" id="COG1825">
    <property type="taxonomic scope" value="Bacteria"/>
</dbReference>
<dbReference type="HOGENOM" id="CLU_075939_2_0_7"/>
<dbReference type="OrthoDB" id="9786489at2"/>
<dbReference type="GO" id="GO:0022625">
    <property type="term" value="C:cytosolic large ribosomal subunit"/>
    <property type="evidence" value="ECO:0007669"/>
    <property type="project" value="TreeGrafter"/>
</dbReference>
<dbReference type="GO" id="GO:0008097">
    <property type="term" value="F:5S rRNA binding"/>
    <property type="evidence" value="ECO:0007669"/>
    <property type="project" value="InterPro"/>
</dbReference>
<dbReference type="GO" id="GO:0003735">
    <property type="term" value="F:structural constituent of ribosome"/>
    <property type="evidence" value="ECO:0007669"/>
    <property type="project" value="InterPro"/>
</dbReference>
<dbReference type="GO" id="GO:0006412">
    <property type="term" value="P:translation"/>
    <property type="evidence" value="ECO:0007669"/>
    <property type="project" value="UniProtKB-UniRule"/>
</dbReference>
<dbReference type="CDD" id="cd00495">
    <property type="entry name" value="Ribosomal_L25_TL5_CTC"/>
    <property type="match status" value="1"/>
</dbReference>
<dbReference type="Gene3D" id="2.170.120.20">
    <property type="entry name" value="Ribosomal protein L25, beta domain"/>
    <property type="match status" value="1"/>
</dbReference>
<dbReference type="Gene3D" id="2.40.240.10">
    <property type="entry name" value="Ribosomal Protein L25, Chain P"/>
    <property type="match status" value="1"/>
</dbReference>
<dbReference type="HAMAP" id="MF_01334">
    <property type="entry name" value="Ribosomal_bL25_CTC"/>
    <property type="match status" value="1"/>
</dbReference>
<dbReference type="InterPro" id="IPR020056">
    <property type="entry name" value="Rbsml_bL25/Gln-tRNA_synth_N"/>
</dbReference>
<dbReference type="InterPro" id="IPR011035">
    <property type="entry name" value="Ribosomal_bL25/Gln-tRNA_synth"/>
</dbReference>
<dbReference type="InterPro" id="IPR020057">
    <property type="entry name" value="Ribosomal_bL25_b-dom"/>
</dbReference>
<dbReference type="InterPro" id="IPR037121">
    <property type="entry name" value="Ribosomal_bL25_C"/>
</dbReference>
<dbReference type="InterPro" id="IPR001021">
    <property type="entry name" value="Ribosomal_bL25_long"/>
</dbReference>
<dbReference type="InterPro" id="IPR029751">
    <property type="entry name" value="Ribosomal_L25_dom"/>
</dbReference>
<dbReference type="InterPro" id="IPR020930">
    <property type="entry name" value="Ribosomal_uL5_bac-type"/>
</dbReference>
<dbReference type="NCBIfam" id="TIGR00731">
    <property type="entry name" value="bL25_bact_ctc"/>
    <property type="match status" value="1"/>
</dbReference>
<dbReference type="NCBIfam" id="NF004135">
    <property type="entry name" value="PRK05618.3-1"/>
    <property type="match status" value="1"/>
</dbReference>
<dbReference type="PANTHER" id="PTHR33284">
    <property type="entry name" value="RIBOSOMAL PROTEIN L25/GLN-TRNA SYNTHETASE, ANTI-CODON-BINDING DOMAIN-CONTAINING PROTEIN"/>
    <property type="match status" value="1"/>
</dbReference>
<dbReference type="PANTHER" id="PTHR33284:SF1">
    <property type="entry name" value="RIBOSOMAL PROTEIN L25_GLN-TRNA SYNTHETASE, ANTI-CODON-BINDING DOMAIN-CONTAINING PROTEIN"/>
    <property type="match status" value="1"/>
</dbReference>
<dbReference type="Pfam" id="PF01386">
    <property type="entry name" value="Ribosomal_L25p"/>
    <property type="match status" value="1"/>
</dbReference>
<dbReference type="Pfam" id="PF14693">
    <property type="entry name" value="Ribosomal_TL5_C"/>
    <property type="match status" value="1"/>
</dbReference>
<dbReference type="SUPFAM" id="SSF50715">
    <property type="entry name" value="Ribosomal protein L25-like"/>
    <property type="match status" value="1"/>
</dbReference>
<keyword id="KW-0687">Ribonucleoprotein</keyword>
<keyword id="KW-0689">Ribosomal protein</keyword>
<keyword id="KW-0694">RNA-binding</keyword>
<keyword id="KW-0699">rRNA-binding</keyword>
<evidence type="ECO:0000255" key="1">
    <source>
        <dbReference type="HAMAP-Rule" id="MF_01334"/>
    </source>
</evidence>
<evidence type="ECO:0000305" key="2"/>
<comment type="function">
    <text evidence="1">This is one of the proteins that binds to the 5S RNA in the ribosome where it forms part of the central protuberance.</text>
</comment>
<comment type="subunit">
    <text evidence="1">Part of the 50S ribosomal subunit; part of the 5S rRNA/L5/L18/L25 subcomplex. Contacts the 5S rRNA. Binds to the 5S rRNA independently of L5 and L18.</text>
</comment>
<comment type="similarity">
    <text evidence="1">Belongs to the bacterial ribosomal protein bL25 family. CTC subfamily.</text>
</comment>
<proteinExistence type="inferred from homology"/>
<protein>
    <recommendedName>
        <fullName evidence="1">Large ribosomal subunit protein bL25</fullName>
    </recommendedName>
    <alternativeName>
        <fullName evidence="2">50S ribosomal protein L25</fullName>
    </alternativeName>
    <alternativeName>
        <fullName evidence="1">General stress protein CTC</fullName>
    </alternativeName>
</protein>
<organism>
    <name type="scientific">Nitratidesulfovibrio vulgaris (strain DSM 19637 / Miyazaki F)</name>
    <name type="common">Desulfovibrio vulgaris</name>
    <dbReference type="NCBI Taxonomy" id="883"/>
    <lineage>
        <taxon>Bacteria</taxon>
        <taxon>Pseudomonadati</taxon>
        <taxon>Thermodesulfobacteriota</taxon>
        <taxon>Desulfovibrionia</taxon>
        <taxon>Desulfovibrionales</taxon>
        <taxon>Desulfovibrionaceae</taxon>
        <taxon>Nitratidesulfovibrio</taxon>
    </lineage>
</organism>
<name>RL25_NITV9</name>
<feature type="chain" id="PRO_1000142517" description="Large ribosomal subunit protein bL25">
    <location>
        <begin position="1"/>
        <end position="191"/>
    </location>
</feature>